<comment type="similarity">
    <text evidence="2">Belongs to the heat shock protein 70 family.</text>
</comment>
<keyword id="KW-0067">ATP-binding</keyword>
<keyword id="KW-0547">Nucleotide-binding</keyword>
<keyword id="KW-1185">Reference proteome</keyword>
<keyword id="KW-0346">Stress response</keyword>
<name>HSP70_SOYBN</name>
<feature type="chain" id="PRO_0000078355" description="Heat shock 70 kDa protein">
    <location>
        <begin position="1"/>
        <end position="645"/>
    </location>
</feature>
<feature type="region of interest" description="Disordered" evidence="1">
    <location>
        <begin position="620"/>
        <end position="645"/>
    </location>
</feature>
<feature type="compositionally biased region" description="Low complexity" evidence="1">
    <location>
        <begin position="627"/>
        <end position="639"/>
    </location>
</feature>
<dbReference type="EMBL" id="X62799">
    <property type="protein sequence ID" value="CAA44620.1"/>
    <property type="molecule type" value="Genomic_DNA"/>
</dbReference>
<dbReference type="PIR" id="S14992">
    <property type="entry name" value="S14992"/>
</dbReference>
<dbReference type="SMR" id="P26413"/>
<dbReference type="FunCoup" id="P26413">
    <property type="interactions" value="3440"/>
</dbReference>
<dbReference type="STRING" id="3847.P26413"/>
<dbReference type="PaxDb" id="3847-GLYMA17G08020.1"/>
<dbReference type="ProMEX" id="P26413"/>
<dbReference type="eggNOG" id="KOG0101">
    <property type="taxonomic scope" value="Eukaryota"/>
</dbReference>
<dbReference type="InParanoid" id="P26413"/>
<dbReference type="Proteomes" id="UP000008827">
    <property type="component" value="Unplaced"/>
</dbReference>
<dbReference type="GO" id="GO:0005737">
    <property type="term" value="C:cytoplasm"/>
    <property type="evidence" value="ECO:0000318"/>
    <property type="project" value="GO_Central"/>
</dbReference>
<dbReference type="GO" id="GO:0005524">
    <property type="term" value="F:ATP binding"/>
    <property type="evidence" value="ECO:0007669"/>
    <property type="project" value="UniProtKB-KW"/>
</dbReference>
<dbReference type="GO" id="GO:0016887">
    <property type="term" value="F:ATP hydrolysis activity"/>
    <property type="evidence" value="ECO:0000318"/>
    <property type="project" value="GO_Central"/>
</dbReference>
<dbReference type="GO" id="GO:0140662">
    <property type="term" value="F:ATP-dependent protein folding chaperone"/>
    <property type="evidence" value="ECO:0007669"/>
    <property type="project" value="InterPro"/>
</dbReference>
<dbReference type="GO" id="GO:0031072">
    <property type="term" value="F:heat shock protein binding"/>
    <property type="evidence" value="ECO:0000318"/>
    <property type="project" value="GO_Central"/>
</dbReference>
<dbReference type="GO" id="GO:0044183">
    <property type="term" value="F:protein folding chaperone"/>
    <property type="evidence" value="ECO:0000318"/>
    <property type="project" value="GO_Central"/>
</dbReference>
<dbReference type="GO" id="GO:0051085">
    <property type="term" value="P:chaperone cofactor-dependent protein refolding"/>
    <property type="evidence" value="ECO:0000318"/>
    <property type="project" value="GO_Central"/>
</dbReference>
<dbReference type="GO" id="GO:0042026">
    <property type="term" value="P:protein refolding"/>
    <property type="evidence" value="ECO:0000318"/>
    <property type="project" value="GO_Central"/>
</dbReference>
<dbReference type="CDD" id="cd10233">
    <property type="entry name" value="ASKHA_NBD_HSP70_HSPA1"/>
    <property type="match status" value="1"/>
</dbReference>
<dbReference type="FunFam" id="2.60.34.10:FF:000002">
    <property type="entry name" value="Heat shock 70 kDa"/>
    <property type="match status" value="1"/>
</dbReference>
<dbReference type="FunFam" id="3.90.640.10:FF:000002">
    <property type="entry name" value="Heat shock 70 kDa"/>
    <property type="match status" value="1"/>
</dbReference>
<dbReference type="FunFam" id="3.30.420.40:FF:000172">
    <property type="entry name" value="Heat shock 70 kDa protein"/>
    <property type="match status" value="1"/>
</dbReference>
<dbReference type="FunFam" id="3.30.30.30:FF:000001">
    <property type="entry name" value="heat shock 70 kDa protein-like"/>
    <property type="match status" value="1"/>
</dbReference>
<dbReference type="FunFam" id="3.30.420.40:FF:000465">
    <property type="entry name" value="Heat shock cognate 70 kDa protein 2"/>
    <property type="match status" value="1"/>
</dbReference>
<dbReference type="FunFam" id="1.20.1270.10:FF:000005">
    <property type="entry name" value="heat shock cognate 70 kDa protein-like"/>
    <property type="match status" value="1"/>
</dbReference>
<dbReference type="FunFam" id="3.30.420.40:FF:000026">
    <property type="entry name" value="Heat shock protein 70"/>
    <property type="match status" value="1"/>
</dbReference>
<dbReference type="Gene3D" id="1.20.1270.10">
    <property type="match status" value="1"/>
</dbReference>
<dbReference type="Gene3D" id="3.30.30.30">
    <property type="match status" value="1"/>
</dbReference>
<dbReference type="Gene3D" id="3.30.420.40">
    <property type="match status" value="2"/>
</dbReference>
<dbReference type="Gene3D" id="3.90.640.10">
    <property type="entry name" value="Actin, Chain A, domain 4"/>
    <property type="match status" value="1"/>
</dbReference>
<dbReference type="Gene3D" id="2.60.34.10">
    <property type="entry name" value="Substrate Binding Domain Of DNAk, Chain A, domain 1"/>
    <property type="match status" value="1"/>
</dbReference>
<dbReference type="InterPro" id="IPR043129">
    <property type="entry name" value="ATPase_NBD"/>
</dbReference>
<dbReference type="InterPro" id="IPR018181">
    <property type="entry name" value="Heat_shock_70_CS"/>
</dbReference>
<dbReference type="InterPro" id="IPR029048">
    <property type="entry name" value="HSP70_C_sf"/>
</dbReference>
<dbReference type="InterPro" id="IPR029047">
    <property type="entry name" value="HSP70_peptide-bd_sf"/>
</dbReference>
<dbReference type="InterPro" id="IPR013126">
    <property type="entry name" value="Hsp_70_fam"/>
</dbReference>
<dbReference type="NCBIfam" id="NF001413">
    <property type="entry name" value="PRK00290.1"/>
    <property type="match status" value="1"/>
</dbReference>
<dbReference type="PANTHER" id="PTHR19375">
    <property type="entry name" value="HEAT SHOCK PROTEIN 70KDA"/>
    <property type="match status" value="1"/>
</dbReference>
<dbReference type="Pfam" id="PF00012">
    <property type="entry name" value="HSP70"/>
    <property type="match status" value="1"/>
</dbReference>
<dbReference type="PRINTS" id="PR00301">
    <property type="entry name" value="HEATSHOCK70"/>
</dbReference>
<dbReference type="SUPFAM" id="SSF53067">
    <property type="entry name" value="Actin-like ATPase domain"/>
    <property type="match status" value="2"/>
</dbReference>
<dbReference type="SUPFAM" id="SSF100934">
    <property type="entry name" value="Heat shock protein 70kD (HSP70), C-terminal subdomain"/>
    <property type="match status" value="1"/>
</dbReference>
<dbReference type="SUPFAM" id="SSF100920">
    <property type="entry name" value="Heat shock protein 70kD (HSP70), peptide-binding domain"/>
    <property type="match status" value="1"/>
</dbReference>
<dbReference type="PROSITE" id="PS00297">
    <property type="entry name" value="HSP70_1"/>
    <property type="match status" value="1"/>
</dbReference>
<dbReference type="PROSITE" id="PS00329">
    <property type="entry name" value="HSP70_2"/>
    <property type="match status" value="1"/>
</dbReference>
<dbReference type="PROSITE" id="PS01036">
    <property type="entry name" value="HSP70_3"/>
    <property type="match status" value="1"/>
</dbReference>
<proteinExistence type="inferred from homology"/>
<accession>P26413</accession>
<evidence type="ECO:0000256" key="1">
    <source>
        <dbReference type="SAM" id="MobiDB-lite"/>
    </source>
</evidence>
<evidence type="ECO:0000305" key="2"/>
<gene>
    <name type="primary">HSP70</name>
</gene>
<organism>
    <name type="scientific">Glycine max</name>
    <name type="common">Soybean</name>
    <name type="synonym">Glycine hispida</name>
    <dbReference type="NCBI Taxonomy" id="3847"/>
    <lineage>
        <taxon>Eukaryota</taxon>
        <taxon>Viridiplantae</taxon>
        <taxon>Streptophyta</taxon>
        <taxon>Embryophyta</taxon>
        <taxon>Tracheophyta</taxon>
        <taxon>Spermatophyta</taxon>
        <taxon>Magnoliopsida</taxon>
        <taxon>eudicotyledons</taxon>
        <taxon>Gunneridae</taxon>
        <taxon>Pentapetalae</taxon>
        <taxon>rosids</taxon>
        <taxon>fabids</taxon>
        <taxon>Fabales</taxon>
        <taxon>Fabaceae</taxon>
        <taxon>Papilionoideae</taxon>
        <taxon>50 kb inversion clade</taxon>
        <taxon>NPAAA clade</taxon>
        <taxon>indigoferoid/millettioid clade</taxon>
        <taxon>Phaseoleae</taxon>
        <taxon>Glycine</taxon>
        <taxon>Glycine subgen. Soja</taxon>
    </lineage>
</organism>
<sequence>MATKEGKAIGIDLGTTYSCVGVWQNDRVEIIPNDQGNRTTPSYVAFTDTERLIGDAAKNQVAMNPQNTVFDAKRLIGRRFSDSSVQNDMKLWPFKVGGSPCDKPMIVVNYKGEEKKFSAEEISSMVLVKMREVAEAFLGHAVKNAVVTVPAYFNDSQRQATKDAGAISGLNVLRIINEPTAAAIAYGLDKKASRKGEQNVLIFDLGGGTFDVSILTIEEGIFEVKATAGDTHLGGEDFDNRMVNHFVSEFKRKNKKDISGNARALRRLRTACERAKRTLSSTAQTTIEIDSLYEGIDFYATITRARFEEMNMDLFRKCMEPVEKCLRDAKIDKSQVHEVVLVGGSTRIPKVHQLLQDFFNGKELCKSINPDEAVAYGAAVQAAILSGQGDEKVQDLLLLDVTPLSLGLETAGGVMTVLIPRNTTIPTKKEQIFSTYSDNQPGVLIQVFEGERARTKDNNLLGKFELTGIPPAPRGVPQVNVCFDIDANGILNVSAEDKTAGVKNKITITNDKGRLSKEEIEKMVKDAERYKAEDEEVKKKVEAKNSLENYAYNMRNTIKDEKIGGKLSPDEKQKIEKAVEDAIQWLEGNQMAEVDEFEDKQKELEGICNPIIAKMYQGAAGPGGDVPMGADMPAAGAGPKIEEVD</sequence>
<reference key="1">
    <citation type="journal article" date="1991" name="Plant Mol. Biol.">
        <title>Isolation and characterization of a soybean hsp70 gene.</title>
        <authorList>
            <person name="Roberts J.K."/>
            <person name="Key J.L."/>
        </authorList>
    </citation>
    <scope>NUCLEOTIDE SEQUENCE [GENOMIC DNA]</scope>
</reference>
<protein>
    <recommendedName>
        <fullName>Heat shock 70 kDa protein</fullName>
    </recommendedName>
</protein>